<proteinExistence type="evidence at protein level"/>
<evidence type="ECO:0000305" key="1">
    <source ref="2"/>
</evidence>
<evidence type="ECO:0007829" key="2">
    <source>
        <dbReference type="PDB" id="2DLB"/>
    </source>
</evidence>
<keyword id="KW-0002">3D-structure</keyword>
<keyword id="KW-1185">Reference proteome</keyword>
<gene>
    <name type="primary">yopT</name>
    <name type="ordered locus">BSU20770</name>
</gene>
<name>YOPT_BACSU</name>
<comment type="subunit">
    <text evidence="1">Homodimer.</text>
</comment>
<reference key="1">
    <citation type="journal article" date="1997" name="Nature">
        <title>The complete genome sequence of the Gram-positive bacterium Bacillus subtilis.</title>
        <authorList>
            <person name="Kunst F."/>
            <person name="Ogasawara N."/>
            <person name="Moszer I."/>
            <person name="Albertini A.M."/>
            <person name="Alloni G."/>
            <person name="Azevedo V."/>
            <person name="Bertero M.G."/>
            <person name="Bessieres P."/>
            <person name="Bolotin A."/>
            <person name="Borchert S."/>
            <person name="Borriss R."/>
            <person name="Boursier L."/>
            <person name="Brans A."/>
            <person name="Braun M."/>
            <person name="Brignell S.C."/>
            <person name="Bron S."/>
            <person name="Brouillet S."/>
            <person name="Bruschi C.V."/>
            <person name="Caldwell B."/>
            <person name="Capuano V."/>
            <person name="Carter N.M."/>
            <person name="Choi S.-K."/>
            <person name="Codani J.-J."/>
            <person name="Connerton I.F."/>
            <person name="Cummings N.J."/>
            <person name="Daniel R.A."/>
            <person name="Denizot F."/>
            <person name="Devine K.M."/>
            <person name="Duesterhoeft A."/>
            <person name="Ehrlich S.D."/>
            <person name="Emmerson P.T."/>
            <person name="Entian K.-D."/>
            <person name="Errington J."/>
            <person name="Fabret C."/>
            <person name="Ferrari E."/>
            <person name="Foulger D."/>
            <person name="Fritz C."/>
            <person name="Fujita M."/>
            <person name="Fujita Y."/>
            <person name="Fuma S."/>
            <person name="Galizzi A."/>
            <person name="Galleron N."/>
            <person name="Ghim S.-Y."/>
            <person name="Glaser P."/>
            <person name="Goffeau A."/>
            <person name="Golightly E.J."/>
            <person name="Grandi G."/>
            <person name="Guiseppi G."/>
            <person name="Guy B.J."/>
            <person name="Haga K."/>
            <person name="Haiech J."/>
            <person name="Harwood C.R."/>
            <person name="Henaut A."/>
            <person name="Hilbert H."/>
            <person name="Holsappel S."/>
            <person name="Hosono S."/>
            <person name="Hullo M.-F."/>
            <person name="Itaya M."/>
            <person name="Jones L.-M."/>
            <person name="Joris B."/>
            <person name="Karamata D."/>
            <person name="Kasahara Y."/>
            <person name="Klaerr-Blanchard M."/>
            <person name="Klein C."/>
            <person name="Kobayashi Y."/>
            <person name="Koetter P."/>
            <person name="Koningstein G."/>
            <person name="Krogh S."/>
            <person name="Kumano M."/>
            <person name="Kurita K."/>
            <person name="Lapidus A."/>
            <person name="Lardinois S."/>
            <person name="Lauber J."/>
            <person name="Lazarevic V."/>
            <person name="Lee S.-M."/>
            <person name="Levine A."/>
            <person name="Liu H."/>
            <person name="Masuda S."/>
            <person name="Mauel C."/>
            <person name="Medigue C."/>
            <person name="Medina N."/>
            <person name="Mellado R.P."/>
            <person name="Mizuno M."/>
            <person name="Moestl D."/>
            <person name="Nakai S."/>
            <person name="Noback M."/>
            <person name="Noone D."/>
            <person name="O'Reilly M."/>
            <person name="Ogawa K."/>
            <person name="Ogiwara A."/>
            <person name="Oudega B."/>
            <person name="Park S.-H."/>
            <person name="Parro V."/>
            <person name="Pohl T.M."/>
            <person name="Portetelle D."/>
            <person name="Porwollik S."/>
            <person name="Prescott A.M."/>
            <person name="Presecan E."/>
            <person name="Pujic P."/>
            <person name="Purnelle B."/>
            <person name="Rapoport G."/>
            <person name="Rey M."/>
            <person name="Reynolds S."/>
            <person name="Rieger M."/>
            <person name="Rivolta C."/>
            <person name="Rocha E."/>
            <person name="Roche B."/>
            <person name="Rose M."/>
            <person name="Sadaie Y."/>
            <person name="Sato T."/>
            <person name="Scanlan E."/>
            <person name="Schleich S."/>
            <person name="Schroeter R."/>
            <person name="Scoffone F."/>
            <person name="Sekiguchi J."/>
            <person name="Sekowska A."/>
            <person name="Seror S.J."/>
            <person name="Serror P."/>
            <person name="Shin B.-S."/>
            <person name="Soldo B."/>
            <person name="Sorokin A."/>
            <person name="Tacconi E."/>
            <person name="Takagi T."/>
            <person name="Takahashi H."/>
            <person name="Takemaru K."/>
            <person name="Takeuchi M."/>
            <person name="Tamakoshi A."/>
            <person name="Tanaka T."/>
            <person name="Terpstra P."/>
            <person name="Tognoni A."/>
            <person name="Tosato V."/>
            <person name="Uchiyama S."/>
            <person name="Vandenbol M."/>
            <person name="Vannier F."/>
            <person name="Vassarotti A."/>
            <person name="Viari A."/>
            <person name="Wambutt R."/>
            <person name="Wedler E."/>
            <person name="Wedler H."/>
            <person name="Weitzenegger T."/>
            <person name="Winters P."/>
            <person name="Wipat A."/>
            <person name="Yamamoto H."/>
            <person name="Yamane K."/>
            <person name="Yasumoto K."/>
            <person name="Yata K."/>
            <person name="Yoshida K."/>
            <person name="Yoshikawa H.-F."/>
            <person name="Zumstein E."/>
            <person name="Yoshikawa H."/>
            <person name="Danchin A."/>
        </authorList>
    </citation>
    <scope>NUCLEOTIDE SEQUENCE [LARGE SCALE GENOMIC DNA]</scope>
    <source>
        <strain>168</strain>
    </source>
</reference>
<reference key="2">
    <citation type="submission" date="2006-05" db="PDB data bank">
        <title>X-ray structure of hypothetical protein from Bacillus subtilis O34498 at the resolution of 1.2A. NESG target SR412.</title>
        <authorList>
            <consortium name="Northeast structural genomics consortium (NESG)"/>
        </authorList>
    </citation>
    <scope>X-RAY CRYSTALLOGRAPHY (1.2 ANGSTROMS)</scope>
    <scope>SUBUNIT</scope>
</reference>
<organism>
    <name type="scientific">Bacillus subtilis (strain 168)</name>
    <dbReference type="NCBI Taxonomy" id="224308"/>
    <lineage>
        <taxon>Bacteria</taxon>
        <taxon>Bacillati</taxon>
        <taxon>Bacillota</taxon>
        <taxon>Bacilli</taxon>
        <taxon>Bacillales</taxon>
        <taxon>Bacillaceae</taxon>
        <taxon>Bacillus</taxon>
    </lineage>
</organism>
<dbReference type="EMBL" id="AL009126">
    <property type="protein sequence ID" value="CAB13969.1"/>
    <property type="molecule type" value="Genomic_DNA"/>
</dbReference>
<dbReference type="RefSeq" id="NP_389959.1">
    <property type="nucleotide sequence ID" value="NC_000964.3"/>
</dbReference>
<dbReference type="RefSeq" id="WP_003231034.1">
    <property type="nucleotide sequence ID" value="NZ_OZ025638.1"/>
</dbReference>
<dbReference type="PDB" id="2DLB">
    <property type="method" value="X-ray"/>
    <property type="resolution" value="1.20 A"/>
    <property type="chains" value="A/B=1-72"/>
</dbReference>
<dbReference type="PDBsum" id="2DLB"/>
<dbReference type="SMR" id="O34498"/>
<dbReference type="FunCoup" id="O34498">
    <property type="interactions" value="11"/>
</dbReference>
<dbReference type="STRING" id="224308.BSU20770"/>
<dbReference type="PaxDb" id="224308-BSU20770"/>
<dbReference type="EnsemblBacteria" id="CAB13969">
    <property type="protein sequence ID" value="CAB13969"/>
    <property type="gene ID" value="BSU_20770"/>
</dbReference>
<dbReference type="GeneID" id="939424"/>
<dbReference type="KEGG" id="bsu:BSU20770"/>
<dbReference type="PATRIC" id="fig|224308.179.peg.2267"/>
<dbReference type="InParanoid" id="O34498"/>
<dbReference type="OrthoDB" id="2904893at2"/>
<dbReference type="BioCyc" id="BSUB:BSU20770-MONOMER"/>
<dbReference type="EvolutionaryTrace" id="O34498"/>
<dbReference type="Proteomes" id="UP000001570">
    <property type="component" value="Chromosome"/>
</dbReference>
<dbReference type="Gene3D" id="3.10.20.330">
    <property type="entry name" value="Protein of unknown function YopT"/>
    <property type="match status" value="1"/>
</dbReference>
<dbReference type="InterPro" id="IPR018572">
    <property type="entry name" value="YopT"/>
</dbReference>
<dbReference type="InterPro" id="IPR038082">
    <property type="entry name" value="YopT_sf"/>
</dbReference>
<dbReference type="Pfam" id="PF09467">
    <property type="entry name" value="Yopt"/>
    <property type="match status" value="1"/>
</dbReference>
<dbReference type="SUPFAM" id="SSF159222">
    <property type="entry name" value="YopT-like"/>
    <property type="match status" value="1"/>
</dbReference>
<feature type="chain" id="PRO_0000360633" description="SPbeta prophage-derived uncharacterized protein YopT">
    <location>
        <begin position="1"/>
        <end position="72"/>
    </location>
</feature>
<feature type="strand" evidence="2">
    <location>
        <begin position="3"/>
        <end position="19"/>
    </location>
</feature>
<feature type="helix" evidence="2">
    <location>
        <begin position="23"/>
        <end position="35"/>
    </location>
</feature>
<feature type="turn" evidence="2">
    <location>
        <begin position="36"/>
        <end position="39"/>
    </location>
</feature>
<feature type="strand" evidence="2">
    <location>
        <begin position="41"/>
        <end position="46"/>
    </location>
</feature>
<feature type="strand" evidence="2">
    <location>
        <begin position="52"/>
        <end position="69"/>
    </location>
</feature>
<sequence length="72" mass="8078">MAGYLNNIALNLEIVLKNKADSPEVSETLVTRICENLLLSKEVSFLKADGSVENFKLSDMEYEITNTEELPE</sequence>
<accession>O34498</accession>
<protein>
    <recommendedName>
        <fullName>SPbeta prophage-derived uncharacterized protein YopT</fullName>
    </recommendedName>
</protein>